<name>RNCL_ASPCL</name>
<organism>
    <name type="scientific">Aspergillus clavatus (strain ATCC 1007 / CBS 513.65 / DSM 816 / NCTC 3887 / NRRL 1 / QM 1276 / 107)</name>
    <dbReference type="NCBI Taxonomy" id="344612"/>
    <lineage>
        <taxon>Eukaryota</taxon>
        <taxon>Fungi</taxon>
        <taxon>Dikarya</taxon>
        <taxon>Ascomycota</taxon>
        <taxon>Pezizomycotina</taxon>
        <taxon>Eurotiomycetes</taxon>
        <taxon>Eurotiomycetidae</taxon>
        <taxon>Eurotiales</taxon>
        <taxon>Aspergillaceae</taxon>
        <taxon>Aspergillus</taxon>
        <taxon>Aspergillus subgen. Fumigati</taxon>
    </lineage>
</organism>
<gene>
    <name type="primary">cla</name>
    <name type="synonym">c-sar</name>
    <name type="ORF">ACLA_002920</name>
</gene>
<reference key="1">
    <citation type="journal article" date="2008" name="PLoS Genet.">
        <title>Genomic islands in the pathogenic filamentous fungus Aspergillus fumigatus.</title>
        <authorList>
            <person name="Fedorova N.D."/>
            <person name="Khaldi N."/>
            <person name="Joardar V.S."/>
            <person name="Maiti R."/>
            <person name="Amedeo P."/>
            <person name="Anderson M.J."/>
            <person name="Crabtree J."/>
            <person name="Silva J.C."/>
            <person name="Badger J.H."/>
            <person name="Albarraq A."/>
            <person name="Angiuoli S."/>
            <person name="Bussey H."/>
            <person name="Bowyer P."/>
            <person name="Cotty P.J."/>
            <person name="Dyer P.S."/>
            <person name="Egan A."/>
            <person name="Galens K."/>
            <person name="Fraser-Liggett C.M."/>
            <person name="Haas B.J."/>
            <person name="Inman J.M."/>
            <person name="Kent R."/>
            <person name="Lemieux S."/>
            <person name="Malavazi I."/>
            <person name="Orvis J."/>
            <person name="Roemer T."/>
            <person name="Ronning C.M."/>
            <person name="Sundaram J.P."/>
            <person name="Sutton G."/>
            <person name="Turner G."/>
            <person name="Venter J.C."/>
            <person name="White O.R."/>
            <person name="Whitty B.R."/>
            <person name="Youngman P."/>
            <person name="Wolfe K.H."/>
            <person name="Goldman G.H."/>
            <person name="Wortman J.R."/>
            <person name="Jiang B."/>
            <person name="Denning D.W."/>
            <person name="Nierman W.C."/>
        </authorList>
    </citation>
    <scope>NUCLEOTIDE SEQUENCE [LARGE SCALE GENOMIC DNA]</scope>
    <source>
        <strain>ATCC 1007 / CBS 513.65 / DSM 816 / NCTC 3887 / NRRL 1 / QM 1276 / 107</strain>
    </source>
</reference>
<reference key="2">
    <citation type="journal article" date="1996" name="Eur. J. Biochem.">
        <title>Clavin, a type-1 ribosome-inactivating protein from Aspergillus clavatus IFO 8605. cDNA isolation, heterologous expression, biochemical and biological characterization of the recombinant protein.</title>
        <authorList>
            <person name="Parente D."/>
            <person name="Raucci G."/>
            <person name="Celano B."/>
            <person name="Pacilli A."/>
            <person name="Zanoni L."/>
            <person name="Canevari S."/>
            <person name="Adobati E."/>
            <person name="Colnaghi M.I."/>
            <person name="Dosio F."/>
            <person name="Arpicco S."/>
            <person name="Cattel L."/>
            <person name="Mele A."/>
            <person name="de Santis R."/>
        </authorList>
    </citation>
    <scope>FUNCTION</scope>
    <source>
        <strain>NBRC 8605</strain>
    </source>
</reference>
<reference key="3">
    <citation type="journal article" date="1997" name="Toxicon">
        <title>Characterization of a new ribotoxin gene (c-sar) from Aspergillus clavatus.</title>
        <authorList>
            <person name="Huang K.-C."/>
            <person name="Hwang Y.-Y."/>
            <person name="Hwu L."/>
            <person name="Lin A."/>
        </authorList>
    </citation>
    <scope>FUNCTION</scope>
    <source>
        <strain>BCRC 32114</strain>
    </source>
</reference>
<protein>
    <recommendedName>
        <fullName>Ribonuclease clavin</fullName>
        <ecNumber>3.1.27.-</ecNumber>
    </recommendedName>
</protein>
<keyword id="KW-1015">Disulfide bond</keyword>
<keyword id="KW-0378">Hydrolase</keyword>
<keyword id="KW-0540">Nuclease</keyword>
<keyword id="KW-0652">Protein synthesis inhibitor</keyword>
<keyword id="KW-1185">Reference proteome</keyword>
<keyword id="KW-0964">Secreted</keyword>
<keyword id="KW-0732">Signal</keyword>
<sequence>MVAIKNLVLVALTAVTALAMPSPLEERAATWTCMNEQKNPKTNKYENKRLLYNQNNAESNAHHAPLSDGKTGSSYPHWFTNGYDGDGKILKGRTPIKWGNSDCDRPPKHSKNGDGKNDHYLLEFPTFPDGHQYNFDSKKPKEDPGPARVIYTYPNKVFCGIVAHTRENQGDLKLCSH</sequence>
<comment type="function">
    <text evidence="3 4">Clavin has the same substrate specificity as alpha-sarcin. It is specific for purines in both single- and double-stranded RNA. Its toxic action on eukaryotic cells is the result of cleavage of a single phosphodiester bond in the 60S subunit of ribosomes.</text>
</comment>
<comment type="subcellular location">
    <subcellularLocation>
        <location evidence="1">Secreted</location>
    </subcellularLocation>
</comment>
<comment type="similarity">
    <text evidence="5">Belongs to the ribonuclease U2 family.</text>
</comment>
<dbReference type="EC" id="3.1.27.-"/>
<dbReference type="EMBL" id="DS027004">
    <property type="protein sequence ID" value="EAW14881.1"/>
    <property type="molecule type" value="Genomic_DNA"/>
</dbReference>
<dbReference type="RefSeq" id="XP_001276307.1">
    <property type="nucleotide sequence ID" value="XM_001276306.1"/>
</dbReference>
<dbReference type="SMR" id="P0CL71"/>
<dbReference type="STRING" id="344612.P0CL71"/>
<dbReference type="EnsemblFungi" id="EAW14881">
    <property type="protein sequence ID" value="EAW14881"/>
    <property type="gene ID" value="ACLA_002920"/>
</dbReference>
<dbReference type="GeneID" id="4708501"/>
<dbReference type="KEGG" id="act:ACLA_002920"/>
<dbReference type="VEuPathDB" id="FungiDB:ACLA_002920"/>
<dbReference type="eggNOG" id="ENOG502SV0S">
    <property type="taxonomic scope" value="Eukaryota"/>
</dbReference>
<dbReference type="HOGENOM" id="CLU_1768332_0_0_1"/>
<dbReference type="OMA" id="SSYPHWF"/>
<dbReference type="OrthoDB" id="4998592at2759"/>
<dbReference type="Proteomes" id="UP000006701">
    <property type="component" value="Unassembled WGS sequence"/>
</dbReference>
<dbReference type="GO" id="GO:0005576">
    <property type="term" value="C:extracellular region"/>
    <property type="evidence" value="ECO:0007669"/>
    <property type="project" value="UniProtKB-SubCell"/>
</dbReference>
<dbReference type="GO" id="GO:0003723">
    <property type="term" value="F:RNA binding"/>
    <property type="evidence" value="ECO:0007669"/>
    <property type="project" value="InterPro"/>
</dbReference>
<dbReference type="GO" id="GO:0004521">
    <property type="term" value="F:RNA endonuclease activity"/>
    <property type="evidence" value="ECO:0007669"/>
    <property type="project" value="InterPro"/>
</dbReference>
<dbReference type="GO" id="GO:0017148">
    <property type="term" value="P:negative regulation of translation"/>
    <property type="evidence" value="ECO:0007669"/>
    <property type="project" value="UniProtKB-KW"/>
</dbReference>
<dbReference type="CDD" id="cd00606">
    <property type="entry name" value="fungal_RNase"/>
    <property type="match status" value="1"/>
</dbReference>
<dbReference type="Gene3D" id="3.10.450.30">
    <property type="entry name" value="Microbial ribonucleases"/>
    <property type="match status" value="1"/>
</dbReference>
<dbReference type="InterPro" id="IPR004025">
    <property type="entry name" value="Fun_ribotoxin"/>
</dbReference>
<dbReference type="InterPro" id="IPR000026">
    <property type="entry name" value="N1-like"/>
</dbReference>
<dbReference type="InterPro" id="IPR016191">
    <property type="entry name" value="Ribonuclease/ribotoxin"/>
</dbReference>
<dbReference type="InterPro" id="IPR048269">
    <property type="entry name" value="RNase_U2"/>
</dbReference>
<dbReference type="Pfam" id="PF00545">
    <property type="entry name" value="Ribonuclease"/>
    <property type="match status" value="1"/>
</dbReference>
<dbReference type="PIRSF" id="PIRSF037430">
    <property type="entry name" value="RNase_U2"/>
    <property type="match status" value="1"/>
</dbReference>
<dbReference type="PRINTS" id="PR01704">
    <property type="entry name" value="FUNRIBOTOXIN"/>
</dbReference>
<dbReference type="SUPFAM" id="SSF53933">
    <property type="entry name" value="Microbial ribonucleases"/>
    <property type="match status" value="1"/>
</dbReference>
<feature type="signal peptide" evidence="1">
    <location>
        <begin position="1"/>
        <end position="27"/>
    </location>
</feature>
<feature type="chain" id="PRO_0000406983" description="Ribonuclease clavin">
    <location>
        <begin position="28"/>
        <end position="177"/>
    </location>
</feature>
<feature type="region of interest" description="Disordered" evidence="2">
    <location>
        <begin position="98"/>
        <end position="117"/>
    </location>
</feature>
<feature type="compositionally biased region" description="Basic and acidic residues" evidence="2">
    <location>
        <begin position="102"/>
        <end position="117"/>
    </location>
</feature>
<feature type="active site" evidence="1">
    <location>
        <position position="77"/>
    </location>
</feature>
<feature type="active site" description="Proton acceptor" evidence="1">
    <location>
        <position position="123"/>
    </location>
</feature>
<feature type="active site" description="Proton donor" evidence="1">
    <location>
        <position position="164"/>
    </location>
</feature>
<feature type="disulfide bond" evidence="1">
    <location>
        <begin position="33"/>
        <end position="175"/>
    </location>
</feature>
<feature type="disulfide bond" evidence="1">
    <location>
        <begin position="103"/>
        <end position="159"/>
    </location>
</feature>
<accession>P0CL71</accession>
<accession>A1C5B3</accession>
<accession>P49074</accession>
<accession>P78572</accession>
<evidence type="ECO:0000250" key="1"/>
<evidence type="ECO:0000256" key="2">
    <source>
        <dbReference type="SAM" id="MobiDB-lite"/>
    </source>
</evidence>
<evidence type="ECO:0000269" key="3">
    <source>
    </source>
</evidence>
<evidence type="ECO:0000269" key="4">
    <source>
    </source>
</evidence>
<evidence type="ECO:0000305" key="5"/>
<proteinExistence type="inferred from homology"/>